<accession>Q9BX97</accession>
<accession>Q86VP0</accession>
<accession>Q8N8Y0</accession>
<accession>Q8ND68</accession>
<accession>Q8TER8</accession>
<accession>Q9BZD5</accession>
<organism>
    <name type="scientific">Homo sapiens</name>
    <name type="common">Human</name>
    <dbReference type="NCBI Taxonomy" id="9606"/>
    <lineage>
        <taxon>Eukaryota</taxon>
        <taxon>Metazoa</taxon>
        <taxon>Chordata</taxon>
        <taxon>Craniata</taxon>
        <taxon>Vertebrata</taxon>
        <taxon>Euteleostomi</taxon>
        <taxon>Mammalia</taxon>
        <taxon>Eutheria</taxon>
        <taxon>Euarchontoglires</taxon>
        <taxon>Primates</taxon>
        <taxon>Haplorrhini</taxon>
        <taxon>Catarrhini</taxon>
        <taxon>Hominidae</taxon>
        <taxon>Homo</taxon>
    </lineage>
</organism>
<dbReference type="EMBL" id="AF348827">
    <property type="protein sequence ID" value="AAK20040.1"/>
    <property type="molecule type" value="mRNA"/>
</dbReference>
<dbReference type="EMBL" id="AF326591">
    <property type="protein sequence ID" value="AAK11226.1"/>
    <property type="molecule type" value="mRNA"/>
</dbReference>
<dbReference type="EMBL" id="AK074054">
    <property type="protein sequence ID" value="BAB84880.1"/>
    <property type="molecule type" value="mRNA"/>
</dbReference>
<dbReference type="EMBL" id="AK096030">
    <property type="protein sequence ID" value="BAC04681.1"/>
    <property type="molecule type" value="mRNA"/>
</dbReference>
<dbReference type="EMBL" id="AL834363">
    <property type="protein sequence ID" value="CAD39027.2"/>
    <property type="molecule type" value="mRNA"/>
</dbReference>
<dbReference type="EMBL" id="BC050365">
    <property type="protein sequence ID" value="AAH50365.2"/>
    <property type="molecule type" value="mRNA"/>
</dbReference>
<dbReference type="EMBL" id="BC056414">
    <property type="protein sequence ID" value="AAH56414.1"/>
    <property type="molecule type" value="mRNA"/>
</dbReference>
<dbReference type="CCDS" id="CCDS32952.1"/>
<dbReference type="RefSeq" id="NP_112600.1">
    <property type="nucleotide sequence ID" value="NM_031310.3"/>
</dbReference>
<dbReference type="SMR" id="Q9BX97"/>
<dbReference type="BioGRID" id="123668">
    <property type="interactions" value="15"/>
</dbReference>
<dbReference type="FunCoup" id="Q9BX97">
    <property type="interactions" value="17"/>
</dbReference>
<dbReference type="IntAct" id="Q9BX97">
    <property type="interactions" value="15"/>
</dbReference>
<dbReference type="STRING" id="9606.ENSP00000252590"/>
<dbReference type="TCDB" id="8.A.215.1.1">
    <property type="family name" value="the plasmalemma vesicle-associated protein (plvap) family"/>
</dbReference>
<dbReference type="GlyCosmos" id="Q9BX97">
    <property type="glycosylation" value="5 sites, 1 glycan"/>
</dbReference>
<dbReference type="GlyGen" id="Q9BX97">
    <property type="glycosylation" value="6 sites, 32 N-linked glycans (3 sites), 2 O-linked glycans (2 sites)"/>
</dbReference>
<dbReference type="iPTMnet" id="Q9BX97"/>
<dbReference type="PhosphoSitePlus" id="Q9BX97"/>
<dbReference type="SwissPalm" id="Q9BX97"/>
<dbReference type="BioMuta" id="PLVAP"/>
<dbReference type="DMDM" id="73921753"/>
<dbReference type="jPOST" id="Q9BX97"/>
<dbReference type="MassIVE" id="Q9BX97"/>
<dbReference type="PaxDb" id="9606-ENSP00000252590"/>
<dbReference type="PeptideAtlas" id="Q9BX97"/>
<dbReference type="ProteomicsDB" id="79389"/>
<dbReference type="ABCD" id="Q9BX97">
    <property type="antibodies" value="11 sequenced antibodies"/>
</dbReference>
<dbReference type="Antibodypedia" id="973">
    <property type="antibodies" value="222 antibodies from 25 providers"/>
</dbReference>
<dbReference type="DNASU" id="83483"/>
<dbReference type="Ensembl" id="ENST00000252590.9">
    <property type="protein sequence ID" value="ENSP00000252590.3"/>
    <property type="gene ID" value="ENSG00000130300.9"/>
</dbReference>
<dbReference type="GeneID" id="83483"/>
<dbReference type="KEGG" id="hsa:83483"/>
<dbReference type="MANE-Select" id="ENST00000252590.9">
    <property type="protein sequence ID" value="ENSP00000252590.3"/>
    <property type="RefSeq nucleotide sequence ID" value="NM_031310.3"/>
    <property type="RefSeq protein sequence ID" value="NP_112600.1"/>
</dbReference>
<dbReference type="UCSC" id="uc002ngk.2">
    <property type="organism name" value="human"/>
</dbReference>
<dbReference type="AGR" id="HGNC:13635"/>
<dbReference type="CTD" id="83483"/>
<dbReference type="DisGeNET" id="83483"/>
<dbReference type="GeneCards" id="PLVAP"/>
<dbReference type="HGNC" id="HGNC:13635">
    <property type="gene designation" value="PLVAP"/>
</dbReference>
<dbReference type="HPA" id="ENSG00000130300">
    <property type="expression patterns" value="Tissue enhanced (thyroid)"/>
</dbReference>
<dbReference type="MalaCards" id="PLVAP"/>
<dbReference type="MIM" id="607647">
    <property type="type" value="gene"/>
</dbReference>
<dbReference type="MIM" id="618183">
    <property type="type" value="phenotype"/>
</dbReference>
<dbReference type="neXtProt" id="NX_Q9BX97"/>
<dbReference type="OpenTargets" id="ENSG00000130300"/>
<dbReference type="Orphanet" id="329242">
    <property type="disease" value="Congenital chronic diarrhea with protein-losing enteropathy"/>
</dbReference>
<dbReference type="PharmGKB" id="PA33424"/>
<dbReference type="VEuPathDB" id="HostDB:ENSG00000130300"/>
<dbReference type="eggNOG" id="ENOG502S1PR">
    <property type="taxonomic scope" value="Eukaryota"/>
</dbReference>
<dbReference type="GeneTree" id="ENSGT00390000006166"/>
<dbReference type="HOGENOM" id="CLU_049986_0_0_1"/>
<dbReference type="InParanoid" id="Q9BX97"/>
<dbReference type="OMA" id="ETNKSCD"/>
<dbReference type="OrthoDB" id="9944409at2759"/>
<dbReference type="PAN-GO" id="Q9BX97">
    <property type="GO annotations" value="3 GO annotations based on evolutionary models"/>
</dbReference>
<dbReference type="PhylomeDB" id="Q9BX97"/>
<dbReference type="TreeFam" id="TF337332"/>
<dbReference type="PathwayCommons" id="Q9BX97"/>
<dbReference type="SignaLink" id="Q9BX97"/>
<dbReference type="BioGRID-ORCS" id="83483">
    <property type="hits" value="19 hits in 1146 CRISPR screens"/>
</dbReference>
<dbReference type="ChiTaRS" id="PLVAP">
    <property type="organism name" value="human"/>
</dbReference>
<dbReference type="GeneWiki" id="PLVAP"/>
<dbReference type="GenomeRNAi" id="83483"/>
<dbReference type="Pharos" id="Q9BX97">
    <property type="development level" value="Tbio"/>
</dbReference>
<dbReference type="PRO" id="PR:Q9BX97"/>
<dbReference type="Proteomes" id="UP000005640">
    <property type="component" value="Chromosome 19"/>
</dbReference>
<dbReference type="RNAct" id="Q9BX97">
    <property type="molecule type" value="protein"/>
</dbReference>
<dbReference type="Bgee" id="ENSG00000130300">
    <property type="expression patterns" value="Expressed in left lobe of thyroid gland and 159 other cell types or tissues"/>
</dbReference>
<dbReference type="ExpressionAtlas" id="Q9BX97">
    <property type="expression patterns" value="baseline and differential"/>
</dbReference>
<dbReference type="GO" id="GO:0005901">
    <property type="term" value="C:caveola"/>
    <property type="evidence" value="ECO:0000314"/>
    <property type="project" value="UniProtKB"/>
</dbReference>
<dbReference type="GO" id="GO:0009986">
    <property type="term" value="C:cell surface"/>
    <property type="evidence" value="ECO:0000314"/>
    <property type="project" value="UniProtKB"/>
</dbReference>
<dbReference type="GO" id="GO:0070062">
    <property type="term" value="C:extracellular exosome"/>
    <property type="evidence" value="ECO:0007005"/>
    <property type="project" value="UniProtKB"/>
</dbReference>
<dbReference type="GO" id="GO:0048471">
    <property type="term" value="C:perinuclear region of cytoplasm"/>
    <property type="evidence" value="ECO:0007669"/>
    <property type="project" value="UniProtKB-SubCell"/>
</dbReference>
<dbReference type="GO" id="GO:0042802">
    <property type="term" value="F:identical protein binding"/>
    <property type="evidence" value="ECO:0007669"/>
    <property type="project" value="Ensembl"/>
</dbReference>
<dbReference type="GO" id="GO:0032502">
    <property type="term" value="P:developmental process"/>
    <property type="evidence" value="ECO:0000250"/>
    <property type="project" value="UniProtKB"/>
</dbReference>
<dbReference type="GO" id="GO:0000165">
    <property type="term" value="P:MAPK cascade"/>
    <property type="evidence" value="ECO:0000314"/>
    <property type="project" value="UniProtKB"/>
</dbReference>
<dbReference type="GO" id="GO:0002693">
    <property type="term" value="P:positive regulation of cellular extravasation"/>
    <property type="evidence" value="ECO:0000315"/>
    <property type="project" value="UniProtKB"/>
</dbReference>
<dbReference type="GO" id="GO:0043114">
    <property type="term" value="P:regulation of vascular permeability"/>
    <property type="evidence" value="ECO:0000318"/>
    <property type="project" value="GO_Central"/>
</dbReference>
<dbReference type="GO" id="GO:0033209">
    <property type="term" value="P:tumor necrosis factor-mediated signaling pathway"/>
    <property type="evidence" value="ECO:0000314"/>
    <property type="project" value="UniProtKB"/>
</dbReference>
<dbReference type="InterPro" id="IPR009538">
    <property type="entry name" value="PV-1"/>
</dbReference>
<dbReference type="PANTHER" id="PTHR21687">
    <property type="entry name" value="PLASMALEMMA VESICLE-ASSOCIATED PROTEIN"/>
    <property type="match status" value="1"/>
</dbReference>
<dbReference type="PANTHER" id="PTHR21687:SF5">
    <property type="entry name" value="PLASMALEMMA VESICLE-ASSOCIATED PROTEIN"/>
    <property type="match status" value="1"/>
</dbReference>
<dbReference type="Pfam" id="PF06637">
    <property type="entry name" value="PV-1"/>
    <property type="match status" value="1"/>
</dbReference>
<keyword id="KW-1003">Cell membrane</keyword>
<keyword id="KW-0175">Coiled coil</keyword>
<keyword id="KW-0963">Cytoplasm</keyword>
<keyword id="KW-0225">Disease variant</keyword>
<keyword id="KW-0325">Glycoprotein</keyword>
<keyword id="KW-0472">Membrane</keyword>
<keyword id="KW-1267">Proteomics identification</keyword>
<keyword id="KW-1185">Reference proteome</keyword>
<keyword id="KW-0735">Signal-anchor</keyword>
<keyword id="KW-0812">Transmembrane</keyword>
<keyword id="KW-1133">Transmembrane helix</keyword>
<comment type="function">
    <text evidence="1">Endothelial cell-specific membrane protein involved in the formation of the diaphragms that bridge endothelial fenestrae. It is also required for the formation of stomata of caveolae and transendothelial channels. Functions in microvascular permeability, endothelial fenestrae contributing to the passage of water and solutes and regulating transcellular versus paracellular flow in different organs. Plays a specific role in embryonic development.</text>
</comment>
<comment type="subunit">
    <text evidence="2">Homodimer.</text>
</comment>
<comment type="interaction">
    <interactant intactId="EBI-2803560">
        <id>Q9BX97</id>
    </interactant>
    <interactant intactId="EBI-17234977">
        <id>A0A1U9X8X8</id>
    </interactant>
    <organismsDiffer>false</organismsDiffer>
    <experiments>3</experiments>
</comment>
<comment type="subcellular location">
    <subcellularLocation>
        <location evidence="2">Cell membrane</location>
        <topology evidence="3">Single-pass type II membrane protein</topology>
    </subcellularLocation>
    <subcellularLocation>
        <location evidence="2">Membrane</location>
        <location evidence="2">Caveola</location>
        <topology evidence="3">Single-pass type II membrane protein</topology>
    </subcellularLocation>
    <subcellularLocation>
        <location evidence="2">Cytoplasm</location>
        <location evidence="2">Perinuclear region</location>
    </subcellularLocation>
    <text evidence="2">Membrane-associated protein of caveolae. Found in fenestral and stomatal diaphragms in fenestrated endothelia and transendothelial channels. Also colocalized with CAV1 in perinuclear region.</text>
</comment>
<comment type="tissue specificity">
    <text evidence="5 7">Expressed in lung, kidney, heart, aorta, placenta, muscle, pituitary gland, adrenals, mammary gland, bladder, lymph node, bone marrow, trachea, digestive tract, liver and tumor-associated endothelium.</text>
</comment>
<comment type="induction">
    <text evidence="6 7">By phorbol myristate acetate (PMA) or VEGF in endothelial cell culture.</text>
</comment>
<comment type="disease" evidence="8 9 10">
    <disease id="DI-05384">
        <name>Diarrhea 10, protein-losing enteropathy type</name>
        <acronym>DIAR10</acronym>
        <description>An autosomal recessive, congenital diarrheal disorder characterized by intractable secretory diarrhea with massive protein loss due to leaky fenestrated capillaries, severe hypoalbuminemia, hypogammaglobulinemia, hypertriglyceridemia, and electrolyte abnormalities. Disease severity is variable and death in infancy may occur in severe cases. Some patients show facial dysmorphic features, and cardiac and renal abnormalities.</description>
        <dbReference type="MIM" id="618183"/>
    </disease>
    <text>The disease is caused by variants affecting the gene represented in this entry.</text>
</comment>
<sequence>MGLAMEHGGSYARAGGSSRGCWYYLRYFFLFVSLIQFLIILGLVLFMVYGNVHVSTESNLQATERRAEGLYSQLLGLTASQSNLTKELNFTTRAKDAIMQMWLNARRDLDRINASFRQCQGDRVIYTNNQRYMAAIILSEKQCRDQFKDMNKSCDALLFMLNQKVKTLEVEIAKEKTICTKDKESVLLNKRVAEEQLVECVKTRELQHQERQLAKEQLQKVQALCLPLDKDKFEMDLRNLWRDSIIPRSLDNLGYNLYHPLGSELASIRRACDHMPSLMSSKVEELARSLRADIERVARENSDLQRQKLEAQQGLRASQEAKQKVEKEAQAREAKLQAECSRQTQLALEEKAVLRKERDNLAKELEEKKREAEQLRMELAIRNSALDTCIKTKSQPMMPVSRPMGPVPNPQPIDPASLEEFKRKILESQRPPAGIPVAPSSG</sequence>
<protein>
    <recommendedName>
        <fullName>Plasmalemma vesicle-associated protein</fullName>
    </recommendedName>
    <alternativeName>
        <fullName>Fenestrated endothelial-linked structure protein</fullName>
    </alternativeName>
    <alternativeName>
        <fullName>Plasmalemma vesicle protein 1</fullName>
        <shortName>PV-1</shortName>
    </alternativeName>
</protein>
<gene>
    <name type="primary">PLVAP</name>
    <name type="synonym">FELS</name>
    <name type="synonym">PV1</name>
</gene>
<reference key="1">
    <citation type="journal article" date="2001" name="Genomics">
        <title>cDNA and protein sequence, genomic organization, and analysis of cis regulatory elements of mouse and human PLVAP genes.</title>
        <authorList>
            <person name="Stan R.-V."/>
            <person name="Arden K.C."/>
            <person name="Palade G.E."/>
        </authorList>
    </citation>
    <scope>NUCLEOTIDE SEQUENCE [MRNA]</scope>
    <scope>TISSUE SPECIFICITY</scope>
</reference>
<reference key="2">
    <citation type="submission" date="2000-12" db="EMBL/GenBank/DDBJ databases">
        <authorList>
            <person name="Mesak F.M."/>
            <person name="Schoecklmann H."/>
            <person name="Hallmann R."/>
        </authorList>
    </citation>
    <scope>NUCLEOTIDE SEQUENCE [MRNA]</scope>
</reference>
<reference key="3">
    <citation type="journal article" date="2004" name="Nat. Genet.">
        <title>Complete sequencing and characterization of 21,243 full-length human cDNAs.</title>
        <authorList>
            <person name="Ota T."/>
            <person name="Suzuki Y."/>
            <person name="Nishikawa T."/>
            <person name="Otsuki T."/>
            <person name="Sugiyama T."/>
            <person name="Irie R."/>
            <person name="Wakamatsu A."/>
            <person name="Hayashi K."/>
            <person name="Sato H."/>
            <person name="Nagai K."/>
            <person name="Kimura K."/>
            <person name="Makita H."/>
            <person name="Sekine M."/>
            <person name="Obayashi M."/>
            <person name="Nishi T."/>
            <person name="Shibahara T."/>
            <person name="Tanaka T."/>
            <person name="Ishii S."/>
            <person name="Yamamoto J."/>
            <person name="Saito K."/>
            <person name="Kawai Y."/>
            <person name="Isono Y."/>
            <person name="Nakamura Y."/>
            <person name="Nagahari K."/>
            <person name="Murakami K."/>
            <person name="Yasuda T."/>
            <person name="Iwayanagi T."/>
            <person name="Wagatsuma M."/>
            <person name="Shiratori A."/>
            <person name="Sudo H."/>
            <person name="Hosoiri T."/>
            <person name="Kaku Y."/>
            <person name="Kodaira H."/>
            <person name="Kondo H."/>
            <person name="Sugawara M."/>
            <person name="Takahashi M."/>
            <person name="Kanda K."/>
            <person name="Yokoi T."/>
            <person name="Furuya T."/>
            <person name="Kikkawa E."/>
            <person name="Omura Y."/>
            <person name="Abe K."/>
            <person name="Kamihara K."/>
            <person name="Katsuta N."/>
            <person name="Sato K."/>
            <person name="Tanikawa M."/>
            <person name="Yamazaki M."/>
            <person name="Ninomiya K."/>
            <person name="Ishibashi T."/>
            <person name="Yamashita H."/>
            <person name="Murakawa K."/>
            <person name="Fujimori K."/>
            <person name="Tanai H."/>
            <person name="Kimata M."/>
            <person name="Watanabe M."/>
            <person name="Hiraoka S."/>
            <person name="Chiba Y."/>
            <person name="Ishida S."/>
            <person name="Ono Y."/>
            <person name="Takiguchi S."/>
            <person name="Watanabe S."/>
            <person name="Yosida M."/>
            <person name="Hotuta T."/>
            <person name="Kusano J."/>
            <person name="Kanehori K."/>
            <person name="Takahashi-Fujii A."/>
            <person name="Hara H."/>
            <person name="Tanase T.-O."/>
            <person name="Nomura Y."/>
            <person name="Togiya S."/>
            <person name="Komai F."/>
            <person name="Hara R."/>
            <person name="Takeuchi K."/>
            <person name="Arita M."/>
            <person name="Imose N."/>
            <person name="Musashino K."/>
            <person name="Yuuki H."/>
            <person name="Oshima A."/>
            <person name="Sasaki N."/>
            <person name="Aotsuka S."/>
            <person name="Yoshikawa Y."/>
            <person name="Matsunawa H."/>
            <person name="Ichihara T."/>
            <person name="Shiohata N."/>
            <person name="Sano S."/>
            <person name="Moriya S."/>
            <person name="Momiyama H."/>
            <person name="Satoh N."/>
            <person name="Takami S."/>
            <person name="Terashima Y."/>
            <person name="Suzuki O."/>
            <person name="Nakagawa S."/>
            <person name="Senoh A."/>
            <person name="Mizoguchi H."/>
            <person name="Goto Y."/>
            <person name="Shimizu F."/>
            <person name="Wakebe H."/>
            <person name="Hishigaki H."/>
            <person name="Watanabe T."/>
            <person name="Sugiyama A."/>
            <person name="Takemoto M."/>
            <person name="Kawakami B."/>
            <person name="Yamazaki M."/>
            <person name="Watanabe K."/>
            <person name="Kumagai A."/>
            <person name="Itakura S."/>
            <person name="Fukuzumi Y."/>
            <person name="Fujimori Y."/>
            <person name="Komiyama M."/>
            <person name="Tashiro H."/>
            <person name="Tanigami A."/>
            <person name="Fujiwara T."/>
            <person name="Ono T."/>
            <person name="Yamada K."/>
            <person name="Fujii Y."/>
            <person name="Ozaki K."/>
            <person name="Hirao M."/>
            <person name="Ohmori Y."/>
            <person name="Kawabata A."/>
            <person name="Hikiji T."/>
            <person name="Kobatake N."/>
            <person name="Inagaki H."/>
            <person name="Ikema Y."/>
            <person name="Okamoto S."/>
            <person name="Okitani R."/>
            <person name="Kawakami T."/>
            <person name="Noguchi S."/>
            <person name="Itoh T."/>
            <person name="Shigeta K."/>
            <person name="Senba T."/>
            <person name="Matsumura K."/>
            <person name="Nakajima Y."/>
            <person name="Mizuno T."/>
            <person name="Morinaga M."/>
            <person name="Sasaki M."/>
            <person name="Togashi T."/>
            <person name="Oyama M."/>
            <person name="Hata H."/>
            <person name="Watanabe M."/>
            <person name="Komatsu T."/>
            <person name="Mizushima-Sugano J."/>
            <person name="Satoh T."/>
            <person name="Shirai Y."/>
            <person name="Takahashi Y."/>
            <person name="Nakagawa K."/>
            <person name="Okumura K."/>
            <person name="Nagase T."/>
            <person name="Nomura N."/>
            <person name="Kikuchi H."/>
            <person name="Masuho Y."/>
            <person name="Yamashita R."/>
            <person name="Nakai K."/>
            <person name="Yada T."/>
            <person name="Nakamura Y."/>
            <person name="Ohara O."/>
            <person name="Isogai T."/>
            <person name="Sugano S."/>
        </authorList>
    </citation>
    <scope>NUCLEOTIDE SEQUENCE [LARGE SCALE MRNA]</scope>
    <source>
        <tissue>Kidney</tissue>
        <tissue>Spleen</tissue>
    </source>
</reference>
<reference key="4">
    <citation type="journal article" date="2007" name="BMC Genomics">
        <title>The full-ORF clone resource of the German cDNA consortium.</title>
        <authorList>
            <person name="Bechtel S."/>
            <person name="Rosenfelder H."/>
            <person name="Duda A."/>
            <person name="Schmidt C.P."/>
            <person name="Ernst U."/>
            <person name="Wellenreuther R."/>
            <person name="Mehrle A."/>
            <person name="Schuster C."/>
            <person name="Bahr A."/>
            <person name="Bloecker H."/>
            <person name="Heubner D."/>
            <person name="Hoerlein A."/>
            <person name="Michel G."/>
            <person name="Wedler H."/>
            <person name="Koehrer K."/>
            <person name="Ottenwaelder B."/>
            <person name="Poustka A."/>
            <person name="Wiemann S."/>
            <person name="Schupp I."/>
        </authorList>
    </citation>
    <scope>NUCLEOTIDE SEQUENCE [LARGE SCALE MRNA]</scope>
    <source>
        <tissue>Lymph node</tissue>
    </source>
</reference>
<reference key="5">
    <citation type="journal article" date="2004" name="Genome Res.">
        <title>The status, quality, and expansion of the NIH full-length cDNA project: the Mammalian Gene Collection (MGC).</title>
        <authorList>
            <consortium name="The MGC Project Team"/>
        </authorList>
    </citation>
    <scope>NUCLEOTIDE SEQUENCE [LARGE SCALE MRNA]</scope>
    <source>
        <tissue>PNS</tissue>
    </source>
</reference>
<reference key="6">
    <citation type="journal article" date="2004" name="Mol. Biol. Cell">
        <title>PV1 is a key structural component for the formation of the stomatal and fenestral diaphragms.</title>
        <authorList>
            <person name="Stan R.-V."/>
            <person name="Tkachenko E."/>
            <person name="Niesman I.R."/>
        </authorList>
    </citation>
    <scope>FUNCTION</scope>
    <scope>INDUCTION</scope>
</reference>
<reference key="7">
    <citation type="journal article" date="2005" name="J. Pathol.">
        <title>Plasmalemmal vesicle-associated protein (PLVAP) is expressed by tumour endothelium and is upregulated by vascular endothelial growth factor-A (VEGF).</title>
        <authorList>
            <person name="Strickland L.A."/>
            <person name="Jubb A.M."/>
            <person name="Hongo J.-A."/>
            <person name="Zhong F."/>
            <person name="Burwick J."/>
            <person name="Fu L."/>
            <person name="Frantz G.D."/>
            <person name="Koeppen H."/>
        </authorList>
    </citation>
    <scope>INDUCTION</scope>
    <scope>TISSUE SPECIFICITY</scope>
</reference>
<reference key="8">
    <citation type="journal article" date="2015" name="Cell. Mol. Gastroenterol. Hepatol.">
        <title>Mutations in plasmalemma vesicle associated protein result in sieving protein-losing enteropathy characterized by hypoproteinemia, hypoalbuminemia, and hypertriglyceridemia.</title>
        <authorList>
            <person name="Elkadri A."/>
            <person name="Thoeni C."/>
            <person name="Deharvengt S.J."/>
            <person name="Murchie R."/>
            <person name="Guo C."/>
            <person name="Stavropoulos J.D."/>
            <person name="Marshall C.R."/>
            <person name="Wales P."/>
            <person name="Bandsma R."/>
            <person name="Cutz E."/>
            <person name="Roifman C.M."/>
            <person name="Chitayat D."/>
            <person name="Avitzur Y."/>
            <person name="Stan R.V."/>
            <person name="Muise A.M."/>
        </authorList>
    </citation>
    <scope>INVOLVEMENT IN DIAR10</scope>
    <scope>VARIANT DIAR10 358-ARG--GLY-442 DEL</scope>
    <scope>CHARACTERIZATION OF VARIANT DIAR10 358-ARG--GLY-442 DEL</scope>
</reference>
<reference key="9">
    <citation type="journal article" date="2018" name="J. Med. Genet.">
        <title>Mutations in plasmalemma vesicle-associated protein cause severe syndromic protein-losing enteropathy.</title>
        <authorList>
            <person name="Broekaert I.J."/>
            <person name="Becker K."/>
            <person name="Gottschalk I."/>
            <person name="Koerber F."/>
            <person name="Doetsch J."/>
            <person name="Thiele H."/>
            <person name="Altmueller J."/>
            <person name="Nuernberg P."/>
            <person name="Huenseler C."/>
            <person name="Cirak S."/>
        </authorList>
    </citation>
    <scope>INVOLVEMENT IN DIAR10</scope>
    <scope>VARIANT DIAR10 330-GLN--GLY-442 DEL</scope>
</reference>
<reference key="10">
    <citation type="journal article" date="2018" name="J. Med. Genet.">
        <title>Establishing the role of PLVAP in protein-losing enteropathy: a homozygous missense variant leads to an attenuated phenotype.</title>
        <authorList>
            <person name="Kurolap A."/>
            <person name="Eshach-Adiv O."/>
            <person name="Gonzaga-Jauregui C."/>
            <person name="Dolnikov K."/>
            <person name="Mory A."/>
            <person name="Paperna T."/>
            <person name="Hershkovitz T."/>
            <person name="Overton J.D."/>
            <person name="Kaplan M."/>
            <person name="Glaser F."/>
            <person name="Zohar Y."/>
            <person name="Shuldiner A.R."/>
            <person name="Berger G."/>
            <person name="Baris H.N."/>
        </authorList>
    </citation>
    <scope>INVOLVEMENT IN DIAR10</scope>
    <scope>VARIANT DIAR10 PRO-34</scope>
</reference>
<evidence type="ECO:0000250" key="1">
    <source>
        <dbReference type="UniProtKB" id="Q91VC4"/>
    </source>
</evidence>
<evidence type="ECO:0000250" key="2">
    <source>
        <dbReference type="UniProtKB" id="Q9WV78"/>
    </source>
</evidence>
<evidence type="ECO:0000255" key="3"/>
<evidence type="ECO:0000256" key="4">
    <source>
        <dbReference type="SAM" id="MobiDB-lite"/>
    </source>
</evidence>
<evidence type="ECO:0000269" key="5">
    <source>
    </source>
</evidence>
<evidence type="ECO:0000269" key="6">
    <source>
    </source>
</evidence>
<evidence type="ECO:0000269" key="7">
    <source>
    </source>
</evidence>
<evidence type="ECO:0000269" key="8">
    <source>
    </source>
</evidence>
<evidence type="ECO:0000269" key="9">
    <source>
    </source>
</evidence>
<evidence type="ECO:0000269" key="10">
    <source>
    </source>
</evidence>
<evidence type="ECO:0000305" key="11"/>
<feature type="chain" id="PRO_0000058462" description="Plasmalemma vesicle-associated protein">
    <location>
        <begin position="1"/>
        <end position="442"/>
    </location>
</feature>
<feature type="topological domain" description="Cytoplasmic" evidence="3">
    <location>
        <begin position="1"/>
        <end position="27"/>
    </location>
</feature>
<feature type="transmembrane region" description="Helical; Signal-anchor for type II membrane protein" evidence="3">
    <location>
        <begin position="28"/>
        <end position="48"/>
    </location>
</feature>
<feature type="topological domain" description="Extracellular" evidence="3">
    <location>
        <begin position="49"/>
        <end position="442"/>
    </location>
</feature>
<feature type="region of interest" description="Disordered" evidence="4">
    <location>
        <begin position="301"/>
        <end position="328"/>
    </location>
</feature>
<feature type="region of interest" description="Disordered" evidence="4">
    <location>
        <begin position="394"/>
        <end position="418"/>
    </location>
</feature>
<feature type="coiled-coil region" evidence="3">
    <location>
        <begin position="57"/>
        <end position="77"/>
    </location>
</feature>
<feature type="coiled-coil region" evidence="3">
    <location>
        <begin position="202"/>
        <end position="225"/>
    </location>
</feature>
<feature type="coiled-coil region" evidence="3">
    <location>
        <begin position="280"/>
        <end position="387"/>
    </location>
</feature>
<feature type="compositionally biased region" description="Basic and acidic residues" evidence="4">
    <location>
        <begin position="319"/>
        <end position="328"/>
    </location>
</feature>
<feature type="glycosylation site" description="N-linked (GlcNAc...) asparagine" evidence="3">
    <location>
        <position position="83"/>
    </location>
</feature>
<feature type="glycosylation site" description="N-linked (GlcNAc...) asparagine" evidence="3">
    <location>
        <position position="89"/>
    </location>
</feature>
<feature type="glycosylation site" description="N-linked (GlcNAc...) asparagine" evidence="3">
    <location>
        <position position="113"/>
    </location>
</feature>
<feature type="glycosylation site" description="N-linked (GlcNAc...) asparagine" evidence="3">
    <location>
        <position position="151"/>
    </location>
</feature>
<feature type="sequence variant" id="VAR_081738" description="In DIAR10; dbSNP:rs1568378665." evidence="10">
    <original>L</original>
    <variation>P</variation>
    <location>
        <position position="34"/>
    </location>
</feature>
<feature type="sequence variant" id="VAR_081739" description="In DIAR10." evidence="9">
    <location>
        <begin position="330"/>
        <end position="442"/>
    </location>
</feature>
<feature type="sequence variant" id="VAR_081740" description="In DIAR10; the protein is not expressed in the patient biopsy tissues." evidence="8">
    <location>
        <begin position="358"/>
        <end position="442"/>
    </location>
</feature>
<feature type="sequence conflict" description="In Ref. 2; AAK11226." evidence="11" ref="2">
    <original>Q</original>
    <variation>H</variation>
    <location>
        <position position="130"/>
    </location>
</feature>
<feature type="sequence conflict" description="In Ref. 3; BAC04681." evidence="11" ref="3">
    <location>
        <begin position="328"/>
        <end position="332"/>
    </location>
</feature>
<feature type="sequence conflict" description="In Ref. 3; BAC04681." evidence="11" ref="3">
    <original>P</original>
    <variation>L</variation>
    <location>
        <position position="439"/>
    </location>
</feature>
<name>PLVAP_HUMAN</name>
<proteinExistence type="evidence at protein level"/>